<reference key="1">
    <citation type="journal article" date="1997" name="Mol. Biol. Evol.">
        <title>Phylogenetic analyses of mitochondrial DNA suggest a sister group relationship between Xenarthra (Edentata) and Ferungulates.</title>
        <authorList>
            <person name="Arnason U."/>
            <person name="Gullberg A."/>
            <person name="Janke A."/>
        </authorList>
    </citation>
    <scope>NUCLEOTIDE SEQUENCE [GENOMIC DNA]</scope>
</reference>
<accession>O21326</accession>
<evidence type="ECO:0000250" key="1">
    <source>
        <dbReference type="UniProtKB" id="P03891"/>
    </source>
</evidence>
<evidence type="ECO:0000250" key="2">
    <source>
        <dbReference type="UniProtKB" id="P03892"/>
    </source>
</evidence>
<evidence type="ECO:0000255" key="3"/>
<evidence type="ECO:0000305" key="4"/>
<feature type="chain" id="PRO_0000117577" description="NADH-ubiquinone oxidoreductase chain 2">
    <location>
        <begin position="1"/>
        <end position="347"/>
    </location>
</feature>
<feature type="transmembrane region" description="Helical" evidence="3">
    <location>
        <begin position="3"/>
        <end position="23"/>
    </location>
</feature>
<feature type="transmembrane region" description="Helical" evidence="3">
    <location>
        <begin position="26"/>
        <end position="46"/>
    </location>
</feature>
<feature type="transmembrane region" description="Helical" evidence="3">
    <location>
        <begin position="67"/>
        <end position="87"/>
    </location>
</feature>
<feature type="transmembrane region" description="Helical" evidence="3">
    <location>
        <begin position="96"/>
        <end position="116"/>
    </location>
</feature>
<feature type="transmembrane region" description="Helical" evidence="3">
    <location>
        <begin position="149"/>
        <end position="169"/>
    </location>
</feature>
<feature type="transmembrane region" description="Helical" evidence="3">
    <location>
        <begin position="178"/>
        <end position="198"/>
    </location>
</feature>
<feature type="transmembrane region" description="Helical" evidence="3">
    <location>
        <begin position="200"/>
        <end position="220"/>
    </location>
</feature>
<feature type="transmembrane region" description="Helical" evidence="3">
    <location>
        <begin position="239"/>
        <end position="259"/>
    </location>
</feature>
<feature type="transmembrane region" description="Helical" evidence="3">
    <location>
        <begin position="274"/>
        <end position="294"/>
    </location>
</feature>
<feature type="transmembrane region" description="Helical" evidence="3">
    <location>
        <begin position="325"/>
        <end position="345"/>
    </location>
</feature>
<protein>
    <recommendedName>
        <fullName evidence="1">NADH-ubiquinone oxidoreductase chain 2</fullName>
        <ecNumber evidence="1">7.1.1.2</ecNumber>
    </recommendedName>
    <alternativeName>
        <fullName>NADH dehydrogenase subunit 2</fullName>
    </alternativeName>
</protein>
<comment type="function">
    <text evidence="1">Core subunit of the mitochondrial membrane respiratory chain NADH dehydrogenase (Complex I) which catalyzes electron transfer from NADH through the respiratory chain, using ubiquinone as an electron acceptor. Essential for the catalytic activity and assembly of complex I.</text>
</comment>
<comment type="catalytic activity">
    <reaction evidence="1">
        <text>a ubiquinone + NADH + 5 H(+)(in) = a ubiquinol + NAD(+) + 4 H(+)(out)</text>
        <dbReference type="Rhea" id="RHEA:29091"/>
        <dbReference type="Rhea" id="RHEA-COMP:9565"/>
        <dbReference type="Rhea" id="RHEA-COMP:9566"/>
        <dbReference type="ChEBI" id="CHEBI:15378"/>
        <dbReference type="ChEBI" id="CHEBI:16389"/>
        <dbReference type="ChEBI" id="CHEBI:17976"/>
        <dbReference type="ChEBI" id="CHEBI:57540"/>
        <dbReference type="ChEBI" id="CHEBI:57945"/>
        <dbReference type="EC" id="7.1.1.2"/>
    </reaction>
</comment>
<comment type="subunit">
    <text evidence="1 2">Core subunit of respiratory chain NADH dehydrogenase (Complex I) which is composed of 45 different subunits. Interacts with TMEM242 (By similarity).</text>
</comment>
<comment type="subcellular location">
    <subcellularLocation>
        <location evidence="2">Mitochondrion inner membrane</location>
        <topology evidence="3">Multi-pass membrane protein</topology>
    </subcellularLocation>
</comment>
<comment type="similarity">
    <text evidence="4">Belongs to the complex I subunit 2 family.</text>
</comment>
<dbReference type="EC" id="7.1.1.2" evidence="1"/>
<dbReference type="EMBL" id="Y11832">
    <property type="protein sequence ID" value="CAA72530.1"/>
    <property type="molecule type" value="Genomic_DNA"/>
</dbReference>
<dbReference type="PIR" id="T11442">
    <property type="entry name" value="T11442"/>
</dbReference>
<dbReference type="RefSeq" id="NP_007460.1">
    <property type="nucleotide sequence ID" value="NC_001821.1"/>
</dbReference>
<dbReference type="SMR" id="O21326"/>
<dbReference type="GeneID" id="808135"/>
<dbReference type="KEGG" id="dnm:808135"/>
<dbReference type="CTD" id="4536"/>
<dbReference type="HOGENOM" id="CLU_007100_1_3_1"/>
<dbReference type="OMA" id="HFWVPEV"/>
<dbReference type="GO" id="GO:0005743">
    <property type="term" value="C:mitochondrial inner membrane"/>
    <property type="evidence" value="ECO:0000250"/>
    <property type="project" value="UniProtKB"/>
</dbReference>
<dbReference type="GO" id="GO:0045271">
    <property type="term" value="C:respiratory chain complex I"/>
    <property type="evidence" value="ECO:0007669"/>
    <property type="project" value="Ensembl"/>
</dbReference>
<dbReference type="GO" id="GO:0008137">
    <property type="term" value="F:NADH dehydrogenase (ubiquinone) activity"/>
    <property type="evidence" value="ECO:0000250"/>
    <property type="project" value="UniProtKB"/>
</dbReference>
<dbReference type="GO" id="GO:0006120">
    <property type="term" value="P:mitochondrial electron transport, NADH to ubiquinone"/>
    <property type="evidence" value="ECO:0000250"/>
    <property type="project" value="UniProtKB"/>
</dbReference>
<dbReference type="GO" id="GO:0032981">
    <property type="term" value="P:mitochondrial respiratory chain complex I assembly"/>
    <property type="evidence" value="ECO:0000250"/>
    <property type="project" value="UniProtKB"/>
</dbReference>
<dbReference type="GO" id="GO:0072593">
    <property type="term" value="P:reactive oxygen species metabolic process"/>
    <property type="evidence" value="ECO:0007669"/>
    <property type="project" value="Ensembl"/>
</dbReference>
<dbReference type="InterPro" id="IPR050175">
    <property type="entry name" value="Complex_I_Subunit_2"/>
</dbReference>
<dbReference type="InterPro" id="IPR010933">
    <property type="entry name" value="NADH_DH_su2_C"/>
</dbReference>
<dbReference type="InterPro" id="IPR003917">
    <property type="entry name" value="NADH_UbQ_OxRdtase_chain2"/>
</dbReference>
<dbReference type="InterPro" id="IPR001750">
    <property type="entry name" value="ND/Mrp_TM"/>
</dbReference>
<dbReference type="PANTHER" id="PTHR46552">
    <property type="entry name" value="NADH-UBIQUINONE OXIDOREDUCTASE CHAIN 2"/>
    <property type="match status" value="1"/>
</dbReference>
<dbReference type="PANTHER" id="PTHR46552:SF1">
    <property type="entry name" value="NADH-UBIQUINONE OXIDOREDUCTASE CHAIN 2"/>
    <property type="match status" value="1"/>
</dbReference>
<dbReference type="Pfam" id="PF06444">
    <property type="entry name" value="NADH_dehy_S2_C"/>
    <property type="match status" value="1"/>
</dbReference>
<dbReference type="Pfam" id="PF00361">
    <property type="entry name" value="Proton_antipo_M"/>
    <property type="match status" value="1"/>
</dbReference>
<dbReference type="PRINTS" id="PR01436">
    <property type="entry name" value="NADHDHGNASE2"/>
</dbReference>
<sequence>MNPLIFIIIMFTLILGTVITMISSHWLLIWMGLEMNMFSMIPIIMMKSHPRSTEAATKYFMTQATASMLLMMGVIINLYYSGQWTIMNSLNPVTSYMMTIALAMKLGLAPFHFWVPEVTQGTQLTSGMILLTWQKLAPMTILYQIHSSLNLNLMLTLAILSILIGGWGGLNQTQLRKIMAYSSIAHMGWMTAIIMYNTSLMMLNLVIYLMMTITMFALFINSTTTTTLSLSLTWNSTPILTTMLLTTLLSLGGLPPLSGFAPKWMIIQEMTKNNMLLLPTTMAIMALLNLYFYMRLIYSTSLTMFPTTNNNKMKWKYKTQNFIPLSPTLITLSTMLIPLTPMMLILN</sequence>
<name>NU2M_DASNO</name>
<geneLocation type="mitochondrion"/>
<organism>
    <name type="scientific">Dasypus novemcinctus</name>
    <name type="common">Nine-banded armadillo</name>
    <dbReference type="NCBI Taxonomy" id="9361"/>
    <lineage>
        <taxon>Eukaryota</taxon>
        <taxon>Metazoa</taxon>
        <taxon>Chordata</taxon>
        <taxon>Craniata</taxon>
        <taxon>Vertebrata</taxon>
        <taxon>Euteleostomi</taxon>
        <taxon>Mammalia</taxon>
        <taxon>Eutheria</taxon>
        <taxon>Xenarthra</taxon>
        <taxon>Cingulata</taxon>
        <taxon>Dasypodidae</taxon>
        <taxon>Dasypus</taxon>
    </lineage>
</organism>
<gene>
    <name evidence="1" type="primary">MT-ND2</name>
    <name type="synonym">MTND2</name>
    <name type="synonym">NADH2</name>
    <name type="synonym">ND2</name>
</gene>
<proteinExistence type="inferred from homology"/>
<keyword id="KW-0249">Electron transport</keyword>
<keyword id="KW-0472">Membrane</keyword>
<keyword id="KW-0496">Mitochondrion</keyword>
<keyword id="KW-0999">Mitochondrion inner membrane</keyword>
<keyword id="KW-0520">NAD</keyword>
<keyword id="KW-0679">Respiratory chain</keyword>
<keyword id="KW-1278">Translocase</keyword>
<keyword id="KW-0812">Transmembrane</keyword>
<keyword id="KW-1133">Transmembrane helix</keyword>
<keyword id="KW-0813">Transport</keyword>
<keyword id="KW-0830">Ubiquinone</keyword>